<protein>
    <recommendedName>
        <fullName evidence="1">Large ribosomal subunit protein eL24</fullName>
    </recommendedName>
    <alternativeName>
        <fullName evidence="2">50S ribosomal protein L24e</fullName>
    </alternativeName>
</protein>
<accession>C3MZM3</accession>
<sequence>MPTTRQCSFCGHEIPPGTGLMYVRNDGTMLWFCSSKCRKSMLKYHRDPKKYKWTTRYMKVR</sequence>
<feature type="chain" id="PRO_1000212909" description="Large ribosomal subunit protein eL24">
    <location>
        <begin position="1"/>
        <end position="61"/>
    </location>
</feature>
<feature type="zinc finger region" description="C4-type" evidence="1">
    <location>
        <begin position="7"/>
        <end position="37"/>
    </location>
</feature>
<feature type="binding site" evidence="1">
    <location>
        <position position="7"/>
    </location>
    <ligand>
        <name>Zn(2+)</name>
        <dbReference type="ChEBI" id="CHEBI:29105"/>
    </ligand>
</feature>
<feature type="binding site" evidence="1">
    <location>
        <position position="10"/>
    </location>
    <ligand>
        <name>Zn(2+)</name>
        <dbReference type="ChEBI" id="CHEBI:29105"/>
    </ligand>
</feature>
<feature type="binding site" evidence="1">
    <location>
        <position position="33"/>
    </location>
    <ligand>
        <name>Zn(2+)</name>
        <dbReference type="ChEBI" id="CHEBI:29105"/>
    </ligand>
</feature>
<feature type="binding site" evidence="1">
    <location>
        <position position="37"/>
    </location>
    <ligand>
        <name>Zn(2+)</name>
        <dbReference type="ChEBI" id="CHEBI:29105"/>
    </ligand>
</feature>
<organism>
    <name type="scientific">Saccharolobus islandicus (strain M.16.27)</name>
    <name type="common">Sulfolobus islandicus</name>
    <dbReference type="NCBI Taxonomy" id="427318"/>
    <lineage>
        <taxon>Archaea</taxon>
        <taxon>Thermoproteota</taxon>
        <taxon>Thermoprotei</taxon>
        <taxon>Sulfolobales</taxon>
        <taxon>Sulfolobaceae</taxon>
        <taxon>Saccharolobus</taxon>
    </lineage>
</organism>
<comment type="function">
    <text evidence="1">Binds to the 23S rRNA.</text>
</comment>
<comment type="cofactor">
    <cofactor evidence="1">
        <name>Zn(2+)</name>
        <dbReference type="ChEBI" id="CHEBI:29105"/>
    </cofactor>
    <text evidence="1">Binds 1 zinc ion per subunit.</text>
</comment>
<comment type="subunit">
    <text evidence="1">Part of the 50S ribosomal subunit. Forms a cluster with proteins L3 and L14.</text>
</comment>
<comment type="similarity">
    <text evidence="1">Belongs to the eukaryotic ribosomal protein eL24 family.</text>
</comment>
<dbReference type="EMBL" id="CP001401">
    <property type="protein sequence ID" value="ACP55855.1"/>
    <property type="molecule type" value="Genomic_DNA"/>
</dbReference>
<dbReference type="RefSeq" id="WP_012711880.1">
    <property type="nucleotide sequence ID" value="NC_012632.1"/>
</dbReference>
<dbReference type="SMR" id="C3MZM3"/>
<dbReference type="KEGG" id="sim:M1627_1984"/>
<dbReference type="HOGENOM" id="CLU_190191_0_0_2"/>
<dbReference type="Proteomes" id="UP000002307">
    <property type="component" value="Chromosome"/>
</dbReference>
<dbReference type="GO" id="GO:1990904">
    <property type="term" value="C:ribonucleoprotein complex"/>
    <property type="evidence" value="ECO:0007669"/>
    <property type="project" value="UniProtKB-KW"/>
</dbReference>
<dbReference type="GO" id="GO:0005840">
    <property type="term" value="C:ribosome"/>
    <property type="evidence" value="ECO:0007669"/>
    <property type="project" value="UniProtKB-KW"/>
</dbReference>
<dbReference type="GO" id="GO:0019843">
    <property type="term" value="F:rRNA binding"/>
    <property type="evidence" value="ECO:0007669"/>
    <property type="project" value="UniProtKB-UniRule"/>
</dbReference>
<dbReference type="GO" id="GO:0003735">
    <property type="term" value="F:structural constituent of ribosome"/>
    <property type="evidence" value="ECO:0007669"/>
    <property type="project" value="InterPro"/>
</dbReference>
<dbReference type="GO" id="GO:0008270">
    <property type="term" value="F:zinc ion binding"/>
    <property type="evidence" value="ECO:0007669"/>
    <property type="project" value="UniProtKB-UniRule"/>
</dbReference>
<dbReference type="GO" id="GO:0006412">
    <property type="term" value="P:translation"/>
    <property type="evidence" value="ECO:0007669"/>
    <property type="project" value="UniProtKB-UniRule"/>
</dbReference>
<dbReference type="CDD" id="cd00472">
    <property type="entry name" value="Ribosomal_L24e_L24"/>
    <property type="match status" value="1"/>
</dbReference>
<dbReference type="FunFam" id="2.30.170.20:FF:000001">
    <property type="entry name" value="probable ribosome biogenesis protein RLP24"/>
    <property type="match status" value="1"/>
</dbReference>
<dbReference type="Gene3D" id="2.30.170.20">
    <property type="entry name" value="Ribosomal protein L24e"/>
    <property type="match status" value="1"/>
</dbReference>
<dbReference type="HAMAP" id="MF_00773">
    <property type="entry name" value="Ribosomal_eL24"/>
    <property type="match status" value="1"/>
</dbReference>
<dbReference type="InterPro" id="IPR038630">
    <property type="entry name" value="L24e/L24_sf"/>
</dbReference>
<dbReference type="InterPro" id="IPR056366">
    <property type="entry name" value="Ribosomal_eL24"/>
</dbReference>
<dbReference type="InterPro" id="IPR055345">
    <property type="entry name" value="Ribosomal_eL24-rel_arc"/>
</dbReference>
<dbReference type="InterPro" id="IPR000988">
    <property type="entry name" value="Ribosomal_eL24-rel_N"/>
</dbReference>
<dbReference type="InterPro" id="IPR023442">
    <property type="entry name" value="Ribosomal_eL24_CS"/>
</dbReference>
<dbReference type="InterPro" id="IPR011017">
    <property type="entry name" value="TRASH_dom"/>
</dbReference>
<dbReference type="NCBIfam" id="NF034186">
    <property type="entry name" value="PRK14891.1-1"/>
    <property type="match status" value="1"/>
</dbReference>
<dbReference type="PANTHER" id="PTHR10792">
    <property type="entry name" value="60S RIBOSOMAL PROTEIN L24"/>
    <property type="match status" value="1"/>
</dbReference>
<dbReference type="PANTHER" id="PTHR10792:SF1">
    <property type="entry name" value="RIBOSOMAL PROTEIN L24"/>
    <property type="match status" value="1"/>
</dbReference>
<dbReference type="Pfam" id="PF01246">
    <property type="entry name" value="Ribosomal_L24e"/>
    <property type="match status" value="1"/>
</dbReference>
<dbReference type="SMART" id="SM00746">
    <property type="entry name" value="TRASH"/>
    <property type="match status" value="1"/>
</dbReference>
<dbReference type="SUPFAM" id="SSF57716">
    <property type="entry name" value="Glucocorticoid receptor-like (DNA-binding domain)"/>
    <property type="match status" value="1"/>
</dbReference>
<dbReference type="PROSITE" id="PS01073">
    <property type="entry name" value="RIBOSOMAL_L24E"/>
    <property type="match status" value="1"/>
</dbReference>
<name>RL24E_SACI3</name>
<proteinExistence type="inferred from homology"/>
<gene>
    <name evidence="1" type="primary">rpl24e</name>
    <name type="ordered locus">M1627_1984</name>
</gene>
<keyword id="KW-0479">Metal-binding</keyword>
<keyword id="KW-0687">Ribonucleoprotein</keyword>
<keyword id="KW-0689">Ribosomal protein</keyword>
<keyword id="KW-0694">RNA-binding</keyword>
<keyword id="KW-0699">rRNA-binding</keyword>
<keyword id="KW-0862">Zinc</keyword>
<keyword id="KW-0863">Zinc-finger</keyword>
<reference key="1">
    <citation type="journal article" date="2009" name="Proc. Natl. Acad. Sci. U.S.A.">
        <title>Biogeography of the Sulfolobus islandicus pan-genome.</title>
        <authorList>
            <person name="Reno M.L."/>
            <person name="Held N.L."/>
            <person name="Fields C.J."/>
            <person name="Burke P.V."/>
            <person name="Whitaker R.J."/>
        </authorList>
    </citation>
    <scope>NUCLEOTIDE SEQUENCE [LARGE SCALE GENOMIC DNA]</scope>
    <source>
        <strain>M.16.27</strain>
    </source>
</reference>
<evidence type="ECO:0000255" key="1">
    <source>
        <dbReference type="HAMAP-Rule" id="MF_00773"/>
    </source>
</evidence>
<evidence type="ECO:0000305" key="2"/>